<name>MPRA_MYCTA</name>
<accession>A5U123</accession>
<reference key="1">
    <citation type="journal article" date="2008" name="PLoS ONE">
        <title>Genetic basis of virulence attenuation revealed by comparative genomic analysis of Mycobacterium tuberculosis strain H37Ra versus H37Rv.</title>
        <authorList>
            <person name="Zheng H."/>
            <person name="Lu L."/>
            <person name="Wang B."/>
            <person name="Pu S."/>
            <person name="Zhang X."/>
            <person name="Zhu G."/>
            <person name="Shi W."/>
            <person name="Zhang L."/>
            <person name="Wang H."/>
            <person name="Wang S."/>
            <person name="Zhao G."/>
            <person name="Zhang Y."/>
        </authorList>
    </citation>
    <scope>NUCLEOTIDE SEQUENCE [LARGE SCALE GENOMIC DNA]</scope>
    <source>
        <strain>ATCC 25177 / H37Ra</strain>
    </source>
</reference>
<dbReference type="EMBL" id="CP000611">
    <property type="protein sequence ID" value="ABQ72723.1"/>
    <property type="molecule type" value="Genomic_DNA"/>
</dbReference>
<dbReference type="SMR" id="A5U123"/>
<dbReference type="KEGG" id="mra:MRA_0988"/>
<dbReference type="eggNOG" id="COG0745">
    <property type="taxonomic scope" value="Bacteria"/>
</dbReference>
<dbReference type="HOGENOM" id="CLU_000445_30_1_11"/>
<dbReference type="Proteomes" id="UP000001988">
    <property type="component" value="Chromosome"/>
</dbReference>
<dbReference type="GO" id="GO:0005829">
    <property type="term" value="C:cytosol"/>
    <property type="evidence" value="ECO:0007669"/>
    <property type="project" value="TreeGrafter"/>
</dbReference>
<dbReference type="GO" id="GO:0032993">
    <property type="term" value="C:protein-DNA complex"/>
    <property type="evidence" value="ECO:0007669"/>
    <property type="project" value="TreeGrafter"/>
</dbReference>
<dbReference type="GO" id="GO:0000156">
    <property type="term" value="F:phosphorelay response regulator activity"/>
    <property type="evidence" value="ECO:0007669"/>
    <property type="project" value="TreeGrafter"/>
</dbReference>
<dbReference type="GO" id="GO:0000976">
    <property type="term" value="F:transcription cis-regulatory region binding"/>
    <property type="evidence" value="ECO:0007669"/>
    <property type="project" value="TreeGrafter"/>
</dbReference>
<dbReference type="GO" id="GO:0006355">
    <property type="term" value="P:regulation of DNA-templated transcription"/>
    <property type="evidence" value="ECO:0007669"/>
    <property type="project" value="InterPro"/>
</dbReference>
<dbReference type="CDD" id="cd17627">
    <property type="entry name" value="REC_OmpR_PrrA-like"/>
    <property type="match status" value="1"/>
</dbReference>
<dbReference type="CDD" id="cd00383">
    <property type="entry name" value="trans_reg_C"/>
    <property type="match status" value="1"/>
</dbReference>
<dbReference type="FunFam" id="3.40.50.2300:FF:000001">
    <property type="entry name" value="DNA-binding response regulator PhoB"/>
    <property type="match status" value="1"/>
</dbReference>
<dbReference type="FunFam" id="1.10.10.10:FF:000005">
    <property type="entry name" value="Two-component system response regulator"/>
    <property type="match status" value="1"/>
</dbReference>
<dbReference type="Gene3D" id="3.40.50.2300">
    <property type="match status" value="1"/>
</dbReference>
<dbReference type="Gene3D" id="6.10.250.690">
    <property type="match status" value="1"/>
</dbReference>
<dbReference type="Gene3D" id="1.10.10.10">
    <property type="entry name" value="Winged helix-like DNA-binding domain superfamily/Winged helix DNA-binding domain"/>
    <property type="match status" value="1"/>
</dbReference>
<dbReference type="InterPro" id="IPR011006">
    <property type="entry name" value="CheY-like_superfamily"/>
</dbReference>
<dbReference type="InterPro" id="IPR001867">
    <property type="entry name" value="OmpR/PhoB-type_DNA-bd"/>
</dbReference>
<dbReference type="InterPro" id="IPR001789">
    <property type="entry name" value="Sig_transdc_resp-reg_receiver"/>
</dbReference>
<dbReference type="InterPro" id="IPR039420">
    <property type="entry name" value="WalR-like"/>
</dbReference>
<dbReference type="InterPro" id="IPR036388">
    <property type="entry name" value="WH-like_DNA-bd_sf"/>
</dbReference>
<dbReference type="PANTHER" id="PTHR48111">
    <property type="entry name" value="REGULATOR OF RPOS"/>
    <property type="match status" value="1"/>
</dbReference>
<dbReference type="PANTHER" id="PTHR48111:SF22">
    <property type="entry name" value="REGULATOR OF RPOS"/>
    <property type="match status" value="1"/>
</dbReference>
<dbReference type="Pfam" id="PF00072">
    <property type="entry name" value="Response_reg"/>
    <property type="match status" value="1"/>
</dbReference>
<dbReference type="Pfam" id="PF00486">
    <property type="entry name" value="Trans_reg_C"/>
    <property type="match status" value="1"/>
</dbReference>
<dbReference type="SMART" id="SM00448">
    <property type="entry name" value="REC"/>
    <property type="match status" value="1"/>
</dbReference>
<dbReference type="SMART" id="SM00862">
    <property type="entry name" value="Trans_reg_C"/>
    <property type="match status" value="1"/>
</dbReference>
<dbReference type="SUPFAM" id="SSF52172">
    <property type="entry name" value="CheY-like"/>
    <property type="match status" value="1"/>
</dbReference>
<dbReference type="PROSITE" id="PS51755">
    <property type="entry name" value="OMPR_PHOB"/>
    <property type="match status" value="1"/>
</dbReference>
<dbReference type="PROSITE" id="PS50110">
    <property type="entry name" value="RESPONSE_REGULATORY"/>
    <property type="match status" value="1"/>
</dbReference>
<organism>
    <name type="scientific">Mycobacterium tuberculosis (strain ATCC 25177 / H37Ra)</name>
    <dbReference type="NCBI Taxonomy" id="419947"/>
    <lineage>
        <taxon>Bacteria</taxon>
        <taxon>Bacillati</taxon>
        <taxon>Actinomycetota</taxon>
        <taxon>Actinomycetes</taxon>
        <taxon>Mycobacteriales</taxon>
        <taxon>Mycobacteriaceae</taxon>
        <taxon>Mycobacterium</taxon>
        <taxon>Mycobacterium tuberculosis complex</taxon>
    </lineage>
</organism>
<sequence>MSVRILVVDDDRAVRESLRRSLSFNGYSVELAHDGVEALDMIASDRPDALVLDVMMPRLDGLEVCRQLRGTGDDLPILVLTARDSVSERVAGLDAGADDYLPKPFALEELLARMRALLRRTKPEDAAESMAMRFSDLTLDPVTREVNRGQRRISLTRTEFALLEMLIANPRRVLTRSRILEEVWGFDFPTSGNALEVYVGYLRRKTEADGEPRLIHTVRGVGYVLRETPP</sequence>
<protein>
    <recommendedName>
        <fullName>Response regulator MprA</fullName>
    </recommendedName>
    <alternativeName>
        <fullName>Mycobacterial persistence regulator A</fullName>
    </alternativeName>
</protein>
<evidence type="ECO:0000250" key="1"/>
<evidence type="ECO:0000255" key="2">
    <source>
        <dbReference type="PROSITE-ProRule" id="PRU00169"/>
    </source>
</evidence>
<evidence type="ECO:0000255" key="3">
    <source>
        <dbReference type="PROSITE-ProRule" id="PRU01091"/>
    </source>
</evidence>
<evidence type="ECO:0000305" key="4"/>
<feature type="chain" id="PRO_0000308428" description="Response regulator MprA">
    <location>
        <begin position="1"/>
        <end position="230"/>
    </location>
</feature>
<feature type="domain" description="Response regulatory" evidence="2">
    <location>
        <begin position="4"/>
        <end position="118"/>
    </location>
</feature>
<feature type="DNA-binding region" description="OmpR/PhoB-type" evidence="3">
    <location>
        <begin position="129"/>
        <end position="227"/>
    </location>
</feature>
<feature type="modified residue" description="4-aspartylphosphate" evidence="2">
    <location>
        <position position="48"/>
    </location>
</feature>
<gene>
    <name type="primary">mprA</name>
    <name type="ordered locus">MRA_0988</name>
</gene>
<comment type="function">
    <text evidence="1">Member of the two-component regulatory system MprB/MprA which contributes to maintaining a balance among several systems involved in stress resistance and is required for establishment and maintenance of persistent infection in the host. Functions as a transcriptional regulator that recognizes a 19-bp nucleotide motif comprizing two loosely conserved 8-bp direct DNA-binding motif repeats separated by a 3-bp spacer region (By similarity).</text>
</comment>
<comment type="subcellular location">
    <subcellularLocation>
        <location evidence="4">Cytoplasm</location>
    </subcellularLocation>
</comment>
<comment type="PTM">
    <text evidence="1">Phosphorylated and dephosphorylated by MprB.</text>
</comment>
<proteinExistence type="inferred from homology"/>
<keyword id="KW-0963">Cytoplasm</keyword>
<keyword id="KW-0238">DNA-binding</keyword>
<keyword id="KW-0597">Phosphoprotein</keyword>
<keyword id="KW-1185">Reference proteome</keyword>
<keyword id="KW-0346">Stress response</keyword>
<keyword id="KW-0804">Transcription</keyword>
<keyword id="KW-0805">Transcription regulation</keyword>
<keyword id="KW-0902">Two-component regulatory system</keyword>
<keyword id="KW-0843">Virulence</keyword>